<protein>
    <recommendedName>
        <fullName>Leukotriene C4 synthase</fullName>
        <shortName>LTC4 synthase</shortName>
        <ecNumber evidence="2">4.4.1.20</ecNumber>
    </recommendedName>
    <alternativeName>
        <fullName>Glutathione S-transferase LTC4</fullName>
        <ecNumber evidence="1">2.5.1.-</ecNumber>
    </alternativeName>
    <alternativeName>
        <fullName>Leukotriene-C(4) synthase</fullName>
    </alternativeName>
</protein>
<dbReference type="EC" id="4.4.1.20" evidence="2"/>
<dbReference type="EC" id="2.5.1.-" evidence="1"/>
<dbReference type="EMBL" id="AB048790">
    <property type="protein sequence ID" value="BAB58882.2"/>
    <property type="molecule type" value="mRNA"/>
</dbReference>
<dbReference type="EMBL" id="AABR07029584">
    <property type="status" value="NOT_ANNOTATED_CDS"/>
    <property type="molecule type" value="Genomic_DNA"/>
</dbReference>
<dbReference type="EMBL" id="CH473948">
    <property type="protein sequence ID" value="EDM04261.1"/>
    <property type="molecule type" value="Genomic_DNA"/>
</dbReference>
<dbReference type="RefSeq" id="NP_446091.2">
    <property type="nucleotide sequence ID" value="NM_053639.2"/>
</dbReference>
<dbReference type="RefSeq" id="XP_008765877.1">
    <property type="nucleotide sequence ID" value="XM_008767655.2"/>
</dbReference>
<dbReference type="SMR" id="Q925U2"/>
<dbReference type="FunCoup" id="Q925U2">
    <property type="interactions" value="22"/>
</dbReference>
<dbReference type="STRING" id="10116.ENSRNOP00000004359"/>
<dbReference type="ChEMBL" id="CHEMBL2172"/>
<dbReference type="PhosphoSitePlus" id="Q925U2"/>
<dbReference type="PaxDb" id="10116-ENSRNOP00000004359"/>
<dbReference type="GeneID" id="114097"/>
<dbReference type="KEGG" id="rno:114097"/>
<dbReference type="UCSC" id="RGD:620677">
    <property type="organism name" value="rat"/>
</dbReference>
<dbReference type="AGR" id="RGD:620677"/>
<dbReference type="CTD" id="4056"/>
<dbReference type="RGD" id="620677">
    <property type="gene designation" value="Ltc4s"/>
</dbReference>
<dbReference type="VEuPathDB" id="HostDB:ENSRNOG00000003244"/>
<dbReference type="eggNOG" id="ENOG502RZYY">
    <property type="taxonomic scope" value="Eukaryota"/>
</dbReference>
<dbReference type="HOGENOM" id="CLU_110291_3_0_1"/>
<dbReference type="InParanoid" id="Q925U2"/>
<dbReference type="PhylomeDB" id="Q925U2"/>
<dbReference type="TreeFam" id="TF105328"/>
<dbReference type="BRENDA" id="4.4.1.20">
    <property type="organism ID" value="5301"/>
</dbReference>
<dbReference type="Reactome" id="R-RNO-2142688">
    <property type="pathway name" value="Synthesis of 5-eicosatetraenoic acids"/>
</dbReference>
<dbReference type="Reactome" id="R-RNO-2142691">
    <property type="pathway name" value="Synthesis of Leukotrienes (LT) and Eoxins (EX)"/>
</dbReference>
<dbReference type="Reactome" id="R-RNO-2142700">
    <property type="pathway name" value="Biosynthesis of Lipoxins (LX)"/>
</dbReference>
<dbReference type="Reactome" id="R-RNO-9026762">
    <property type="pathway name" value="Biosynthesis of maresin conjugates in tissue regeneration (MCTR)"/>
</dbReference>
<dbReference type="Reactome" id="R-RNO-9026766">
    <property type="pathway name" value="Biosynthesis of protectin and resolvin conjugates in tissue regeneration (PCTR and RCTR)"/>
</dbReference>
<dbReference type="UniPathway" id="UPA00879"/>
<dbReference type="PRO" id="PR:Q925U2"/>
<dbReference type="Proteomes" id="UP000002494">
    <property type="component" value="Chromosome 10"/>
</dbReference>
<dbReference type="Proteomes" id="UP000234681">
    <property type="component" value="Chromosome 10"/>
</dbReference>
<dbReference type="Bgee" id="ENSRNOG00000003244">
    <property type="expression patterns" value="Expressed in ovary and 19 other cell types or tissues"/>
</dbReference>
<dbReference type="GO" id="GO:0005783">
    <property type="term" value="C:endoplasmic reticulum"/>
    <property type="evidence" value="ECO:0000266"/>
    <property type="project" value="RGD"/>
</dbReference>
<dbReference type="GO" id="GO:0005789">
    <property type="term" value="C:endoplasmic reticulum membrane"/>
    <property type="evidence" value="ECO:0000250"/>
    <property type="project" value="UniProtKB"/>
</dbReference>
<dbReference type="GO" id="GO:0005635">
    <property type="term" value="C:nuclear envelope"/>
    <property type="evidence" value="ECO:0000266"/>
    <property type="project" value="RGD"/>
</dbReference>
<dbReference type="GO" id="GO:0031965">
    <property type="term" value="C:nuclear membrane"/>
    <property type="evidence" value="ECO:0000250"/>
    <property type="project" value="UniProtKB"/>
</dbReference>
<dbReference type="GO" id="GO:0005640">
    <property type="term" value="C:nuclear outer membrane"/>
    <property type="evidence" value="ECO:0000250"/>
    <property type="project" value="UniProtKB"/>
</dbReference>
<dbReference type="GO" id="GO:0008047">
    <property type="term" value="F:enzyme activator activity"/>
    <property type="evidence" value="ECO:0007669"/>
    <property type="project" value="InterPro"/>
</dbReference>
<dbReference type="GO" id="GO:0043295">
    <property type="term" value="F:glutathione binding"/>
    <property type="evidence" value="ECO:0000314"/>
    <property type="project" value="RGD"/>
</dbReference>
<dbReference type="GO" id="GO:0004602">
    <property type="term" value="F:glutathione peroxidase activity"/>
    <property type="evidence" value="ECO:0000318"/>
    <property type="project" value="GO_Central"/>
</dbReference>
<dbReference type="GO" id="GO:0004364">
    <property type="term" value="F:glutathione transferase activity"/>
    <property type="evidence" value="ECO:0000318"/>
    <property type="project" value="GO_Central"/>
</dbReference>
<dbReference type="GO" id="GO:0042802">
    <property type="term" value="F:identical protein binding"/>
    <property type="evidence" value="ECO:0000266"/>
    <property type="project" value="RGD"/>
</dbReference>
<dbReference type="GO" id="GO:0004464">
    <property type="term" value="F:leukotriene-C4 synthase activity"/>
    <property type="evidence" value="ECO:0000314"/>
    <property type="project" value="RGD"/>
</dbReference>
<dbReference type="GO" id="GO:0008289">
    <property type="term" value="F:lipid binding"/>
    <property type="evidence" value="ECO:0000266"/>
    <property type="project" value="RGD"/>
</dbReference>
<dbReference type="GO" id="GO:0044877">
    <property type="term" value="F:protein-containing complex binding"/>
    <property type="evidence" value="ECO:0000353"/>
    <property type="project" value="RGD"/>
</dbReference>
<dbReference type="GO" id="GO:0071222">
    <property type="term" value="P:cellular response to lipopolysaccharide"/>
    <property type="evidence" value="ECO:0000270"/>
    <property type="project" value="RGD"/>
</dbReference>
<dbReference type="GO" id="GO:0071299">
    <property type="term" value="P:cellular response to vitamin A"/>
    <property type="evidence" value="ECO:0000270"/>
    <property type="project" value="RGD"/>
</dbReference>
<dbReference type="GO" id="GO:0019370">
    <property type="term" value="P:leukotriene biosynthetic process"/>
    <property type="evidence" value="ECO:0000314"/>
    <property type="project" value="RGD"/>
</dbReference>
<dbReference type="GO" id="GO:0006691">
    <property type="term" value="P:leukotriene metabolic process"/>
    <property type="evidence" value="ECO:0000266"/>
    <property type="project" value="RGD"/>
</dbReference>
<dbReference type="GO" id="GO:0042759">
    <property type="term" value="P:long-chain fatty acid biosynthetic process"/>
    <property type="evidence" value="ECO:0000250"/>
    <property type="project" value="UniProtKB"/>
</dbReference>
<dbReference type="GO" id="GO:0048678">
    <property type="term" value="P:response to axon injury"/>
    <property type="evidence" value="ECO:0000270"/>
    <property type="project" value="RGD"/>
</dbReference>
<dbReference type="GO" id="GO:0032496">
    <property type="term" value="P:response to lipopolysaccharide"/>
    <property type="evidence" value="ECO:0000270"/>
    <property type="project" value="RGD"/>
</dbReference>
<dbReference type="GO" id="GO:0009410">
    <property type="term" value="P:response to xenobiotic stimulus"/>
    <property type="evidence" value="ECO:0000270"/>
    <property type="project" value="RGD"/>
</dbReference>
<dbReference type="FunFam" id="1.20.120.550:FF:000003">
    <property type="entry name" value="Leukotriene C4 synthase"/>
    <property type="match status" value="1"/>
</dbReference>
<dbReference type="Gene3D" id="1.20.120.550">
    <property type="entry name" value="Membrane associated eicosanoid/glutathione metabolism-like domain"/>
    <property type="match status" value="1"/>
</dbReference>
<dbReference type="InterPro" id="IPR001446">
    <property type="entry name" value="5_LipOase_AP"/>
</dbReference>
<dbReference type="InterPro" id="IPR018295">
    <property type="entry name" value="FLAP/GST2/LTC4S_CS"/>
</dbReference>
<dbReference type="InterPro" id="IPR050997">
    <property type="entry name" value="MAPEG"/>
</dbReference>
<dbReference type="InterPro" id="IPR023352">
    <property type="entry name" value="MAPEG-like_dom_sf"/>
</dbReference>
<dbReference type="InterPro" id="IPR001129">
    <property type="entry name" value="Membr-assoc_MAPEG"/>
</dbReference>
<dbReference type="PANTHER" id="PTHR10250:SF4">
    <property type="entry name" value="LEUKOTRIENE C4 SYNTHASE"/>
    <property type="match status" value="1"/>
</dbReference>
<dbReference type="PANTHER" id="PTHR10250">
    <property type="entry name" value="MICROSOMAL GLUTATHIONE S-TRANSFERASE"/>
    <property type="match status" value="1"/>
</dbReference>
<dbReference type="Pfam" id="PF01124">
    <property type="entry name" value="MAPEG"/>
    <property type="match status" value="1"/>
</dbReference>
<dbReference type="PRINTS" id="PR00488">
    <property type="entry name" value="5LPOXGNASEAP"/>
</dbReference>
<dbReference type="SUPFAM" id="SSF161084">
    <property type="entry name" value="MAPEG domain-like"/>
    <property type="match status" value="1"/>
</dbReference>
<dbReference type="PROSITE" id="PS01297">
    <property type="entry name" value="FLAP_GST2_LTC4S"/>
    <property type="match status" value="1"/>
</dbReference>
<proteinExistence type="evidence at protein level"/>
<keyword id="KW-0256">Endoplasmic reticulum</keyword>
<keyword id="KW-0434">Leukotriene biosynthesis</keyword>
<keyword id="KW-0456">Lyase</keyword>
<keyword id="KW-0472">Membrane</keyword>
<keyword id="KW-0539">Nucleus</keyword>
<keyword id="KW-0597">Phosphoprotein</keyword>
<keyword id="KW-1185">Reference proteome</keyword>
<keyword id="KW-0808">Transferase</keyword>
<keyword id="KW-0812">Transmembrane</keyword>
<keyword id="KW-1133">Transmembrane helix</keyword>
<reference key="1">
    <citation type="journal article" date="2002" name="Prostaglandins Leukot. Essent. Fatty Acids">
        <title>cDNA cloning and expression of rat leukotriene C(4) synthase: elevated expression in rat basophilic leukemia-1 cells after treatment with retinoic acid.</title>
        <authorList>
            <person name="Abe M."/>
            <person name="Shibata K."/>
            <person name="Saruwatar S."/>
            <person name="Soeda S."/>
            <person name="Shimeno H."/>
            <person name="Katsuragi T."/>
        </authorList>
    </citation>
    <scope>NUCLEOTIDE SEQUENCE [MRNA]</scope>
    <scope>FUNCTION</scope>
    <scope>INDUCTION</scope>
    <scope>CATALYTIC ACTIVITY</scope>
</reference>
<reference key="2">
    <citation type="journal article" date="2004" name="Nature">
        <title>Genome sequence of the Brown Norway rat yields insights into mammalian evolution.</title>
        <authorList>
            <person name="Gibbs R.A."/>
            <person name="Weinstock G.M."/>
            <person name="Metzker M.L."/>
            <person name="Muzny D.M."/>
            <person name="Sodergren E.J."/>
            <person name="Scherer S."/>
            <person name="Scott G."/>
            <person name="Steffen D."/>
            <person name="Worley K.C."/>
            <person name="Burch P.E."/>
            <person name="Okwuonu G."/>
            <person name="Hines S."/>
            <person name="Lewis L."/>
            <person name="Deramo C."/>
            <person name="Delgado O."/>
            <person name="Dugan-Rocha S."/>
            <person name="Miner G."/>
            <person name="Morgan M."/>
            <person name="Hawes A."/>
            <person name="Gill R."/>
            <person name="Holt R.A."/>
            <person name="Adams M.D."/>
            <person name="Amanatides P.G."/>
            <person name="Baden-Tillson H."/>
            <person name="Barnstead M."/>
            <person name="Chin S."/>
            <person name="Evans C.A."/>
            <person name="Ferriera S."/>
            <person name="Fosler C."/>
            <person name="Glodek A."/>
            <person name="Gu Z."/>
            <person name="Jennings D."/>
            <person name="Kraft C.L."/>
            <person name="Nguyen T."/>
            <person name="Pfannkoch C.M."/>
            <person name="Sitter C."/>
            <person name="Sutton G.G."/>
            <person name="Venter J.C."/>
            <person name="Woodage T."/>
            <person name="Smith D."/>
            <person name="Lee H.-M."/>
            <person name="Gustafson E."/>
            <person name="Cahill P."/>
            <person name="Kana A."/>
            <person name="Doucette-Stamm L."/>
            <person name="Weinstock K."/>
            <person name="Fechtel K."/>
            <person name="Weiss R.B."/>
            <person name="Dunn D.M."/>
            <person name="Green E.D."/>
            <person name="Blakesley R.W."/>
            <person name="Bouffard G.G."/>
            <person name="De Jong P.J."/>
            <person name="Osoegawa K."/>
            <person name="Zhu B."/>
            <person name="Marra M."/>
            <person name="Schein J."/>
            <person name="Bosdet I."/>
            <person name="Fjell C."/>
            <person name="Jones S."/>
            <person name="Krzywinski M."/>
            <person name="Mathewson C."/>
            <person name="Siddiqui A."/>
            <person name="Wye N."/>
            <person name="McPherson J."/>
            <person name="Zhao S."/>
            <person name="Fraser C.M."/>
            <person name="Shetty J."/>
            <person name="Shatsman S."/>
            <person name="Geer K."/>
            <person name="Chen Y."/>
            <person name="Abramzon S."/>
            <person name="Nierman W.C."/>
            <person name="Havlak P.H."/>
            <person name="Chen R."/>
            <person name="Durbin K.J."/>
            <person name="Egan A."/>
            <person name="Ren Y."/>
            <person name="Song X.-Z."/>
            <person name="Li B."/>
            <person name="Liu Y."/>
            <person name="Qin X."/>
            <person name="Cawley S."/>
            <person name="Cooney A.J."/>
            <person name="D'Souza L.M."/>
            <person name="Martin K."/>
            <person name="Wu J.Q."/>
            <person name="Gonzalez-Garay M.L."/>
            <person name="Jackson A.R."/>
            <person name="Kalafus K.J."/>
            <person name="McLeod M.P."/>
            <person name="Milosavljevic A."/>
            <person name="Virk D."/>
            <person name="Volkov A."/>
            <person name="Wheeler D.A."/>
            <person name="Zhang Z."/>
            <person name="Bailey J.A."/>
            <person name="Eichler E.E."/>
            <person name="Tuzun E."/>
            <person name="Birney E."/>
            <person name="Mongin E."/>
            <person name="Ureta-Vidal A."/>
            <person name="Woodwark C."/>
            <person name="Zdobnov E."/>
            <person name="Bork P."/>
            <person name="Suyama M."/>
            <person name="Torrents D."/>
            <person name="Alexandersson M."/>
            <person name="Trask B.J."/>
            <person name="Young J.M."/>
            <person name="Huang H."/>
            <person name="Wang H."/>
            <person name="Xing H."/>
            <person name="Daniels S."/>
            <person name="Gietzen D."/>
            <person name="Schmidt J."/>
            <person name="Stevens K."/>
            <person name="Vitt U."/>
            <person name="Wingrove J."/>
            <person name="Camara F."/>
            <person name="Mar Alba M."/>
            <person name="Abril J.F."/>
            <person name="Guigo R."/>
            <person name="Smit A."/>
            <person name="Dubchak I."/>
            <person name="Rubin E.M."/>
            <person name="Couronne O."/>
            <person name="Poliakov A."/>
            <person name="Huebner N."/>
            <person name="Ganten D."/>
            <person name="Goesele C."/>
            <person name="Hummel O."/>
            <person name="Kreitler T."/>
            <person name="Lee Y.-A."/>
            <person name="Monti J."/>
            <person name="Schulz H."/>
            <person name="Zimdahl H."/>
            <person name="Himmelbauer H."/>
            <person name="Lehrach H."/>
            <person name="Jacob H.J."/>
            <person name="Bromberg S."/>
            <person name="Gullings-Handley J."/>
            <person name="Jensen-Seaman M.I."/>
            <person name="Kwitek A.E."/>
            <person name="Lazar J."/>
            <person name="Pasko D."/>
            <person name="Tonellato P.J."/>
            <person name="Twigger S."/>
            <person name="Ponting C.P."/>
            <person name="Duarte J.M."/>
            <person name="Rice S."/>
            <person name="Goodstadt L."/>
            <person name="Beatson S.A."/>
            <person name="Emes R.D."/>
            <person name="Winter E.E."/>
            <person name="Webber C."/>
            <person name="Brandt P."/>
            <person name="Nyakatura G."/>
            <person name="Adetobi M."/>
            <person name="Chiaromonte F."/>
            <person name="Elnitski L."/>
            <person name="Eswara P."/>
            <person name="Hardison R.C."/>
            <person name="Hou M."/>
            <person name="Kolbe D."/>
            <person name="Makova K."/>
            <person name="Miller W."/>
            <person name="Nekrutenko A."/>
            <person name="Riemer C."/>
            <person name="Schwartz S."/>
            <person name="Taylor J."/>
            <person name="Yang S."/>
            <person name="Zhang Y."/>
            <person name="Lindpaintner K."/>
            <person name="Andrews T.D."/>
            <person name="Caccamo M."/>
            <person name="Clamp M."/>
            <person name="Clarke L."/>
            <person name="Curwen V."/>
            <person name="Durbin R.M."/>
            <person name="Eyras E."/>
            <person name="Searle S.M."/>
            <person name="Cooper G.M."/>
            <person name="Batzoglou S."/>
            <person name="Brudno M."/>
            <person name="Sidow A."/>
            <person name="Stone E.A."/>
            <person name="Payseur B.A."/>
            <person name="Bourque G."/>
            <person name="Lopez-Otin C."/>
            <person name="Puente X.S."/>
            <person name="Chakrabarti K."/>
            <person name="Chatterji S."/>
            <person name="Dewey C."/>
            <person name="Pachter L."/>
            <person name="Bray N."/>
            <person name="Yap V.B."/>
            <person name="Caspi A."/>
            <person name="Tesler G."/>
            <person name="Pevzner P.A."/>
            <person name="Haussler D."/>
            <person name="Roskin K.M."/>
            <person name="Baertsch R."/>
            <person name="Clawson H."/>
            <person name="Furey T.S."/>
            <person name="Hinrichs A.S."/>
            <person name="Karolchik D."/>
            <person name="Kent W.J."/>
            <person name="Rosenbloom K.R."/>
            <person name="Trumbower H."/>
            <person name="Weirauch M."/>
            <person name="Cooper D.N."/>
            <person name="Stenson P.D."/>
            <person name="Ma B."/>
            <person name="Brent M."/>
            <person name="Arumugam M."/>
            <person name="Shteynberg D."/>
            <person name="Copley R.R."/>
            <person name="Taylor M.S."/>
            <person name="Riethman H."/>
            <person name="Mudunuri U."/>
            <person name="Peterson J."/>
            <person name="Guyer M."/>
            <person name="Felsenfeld A."/>
            <person name="Old S."/>
            <person name="Mockrin S."/>
            <person name="Collins F.S."/>
        </authorList>
    </citation>
    <scope>NUCLEOTIDE SEQUENCE [LARGE SCALE GENOMIC DNA]</scope>
    <source>
        <strain>Brown Norway</strain>
    </source>
</reference>
<reference key="3">
    <citation type="submission" date="2005-07" db="EMBL/GenBank/DDBJ databases">
        <authorList>
            <person name="Mural R.J."/>
            <person name="Adams M.D."/>
            <person name="Myers E.W."/>
            <person name="Smith H.O."/>
            <person name="Venter J.C."/>
        </authorList>
    </citation>
    <scope>NUCLEOTIDE SEQUENCE [LARGE SCALE GENOMIC DNA]</scope>
</reference>
<sequence length="150" mass="16850">MKEETALLATVTLLGVLLQAYFSLQVISARRTFHVSPPLTSGPPEFERVFRAQVNCSEYFPLFLATLWVAGIFFHEGAAALCGLFYLFARLRYFQGYARSAQHRLDPLYASARALWLLVAMAALGLLVHFLPGTLRAALFRWLQVLLPMA</sequence>
<organism>
    <name type="scientific">Rattus norvegicus</name>
    <name type="common">Rat</name>
    <dbReference type="NCBI Taxonomy" id="10116"/>
    <lineage>
        <taxon>Eukaryota</taxon>
        <taxon>Metazoa</taxon>
        <taxon>Chordata</taxon>
        <taxon>Craniata</taxon>
        <taxon>Vertebrata</taxon>
        <taxon>Euteleostomi</taxon>
        <taxon>Mammalia</taxon>
        <taxon>Eutheria</taxon>
        <taxon>Euarchontoglires</taxon>
        <taxon>Glires</taxon>
        <taxon>Rodentia</taxon>
        <taxon>Myomorpha</taxon>
        <taxon>Muroidea</taxon>
        <taxon>Muridae</taxon>
        <taxon>Murinae</taxon>
        <taxon>Rattus</taxon>
    </lineage>
</organism>
<comment type="function">
    <text evidence="1 2">Catalyzes the conjugation of leukotriene A4 with reduced glutathione (GSH) to form leukotriene C4 with high specificity (PubMed:12445492). Can also catalyze the transfer of a glutathionyl group from glutathione (GSH) to 13(S),14(S)-epoxy-docosahexaenoic acid to form maresin conjugate in tissue regeneration 1 (MCTR1), a bioactive lipid mediator that possess potent anti-inflammatory and proresolving actions (By similarity).</text>
</comment>
<comment type="catalytic activity">
    <reaction evidence="2">
        <text>leukotriene C4 = leukotriene A4 + glutathione</text>
        <dbReference type="Rhea" id="RHEA:17617"/>
        <dbReference type="ChEBI" id="CHEBI:57463"/>
        <dbReference type="ChEBI" id="CHEBI:57925"/>
        <dbReference type="ChEBI" id="CHEBI:57973"/>
        <dbReference type="EC" id="4.4.1.20"/>
    </reaction>
    <physiologicalReaction direction="right-to-left" evidence="1">
        <dbReference type="Rhea" id="RHEA:17619"/>
    </physiologicalReaction>
</comment>
<comment type="catalytic activity">
    <reaction evidence="1">
        <text>(13S,14S)-epoxy-(4Z,7Z,9E,11E,16Z,19Z)-docosahexaenoate + glutathione = (13R)-S-glutathionyl-(14S)-hydroxy-(4Z,7Z,9E,11E,16Z,19Z)-docosahexaenoate</text>
        <dbReference type="Rhea" id="RHEA:53508"/>
        <dbReference type="ChEBI" id="CHEBI:57925"/>
        <dbReference type="ChEBI" id="CHEBI:131958"/>
        <dbReference type="ChEBI" id="CHEBI:137407"/>
    </reaction>
    <physiologicalReaction direction="left-to-right" evidence="1">
        <dbReference type="Rhea" id="RHEA:53509"/>
    </physiologicalReaction>
</comment>
<comment type="activity regulation">
    <text evidence="1">Inhibited by MK886.</text>
</comment>
<comment type="pathway">
    <text evidence="1">Lipid metabolism; leukotriene C4 biosynthesis.</text>
</comment>
<comment type="subunit">
    <text evidence="1">Homotrimer. Interacts with ALOX5AP and ALOX5.</text>
</comment>
<comment type="subcellular location">
    <subcellularLocation>
        <location evidence="1">Nucleus outer membrane</location>
        <topology evidence="1">Multi-pass membrane protein</topology>
    </subcellularLocation>
    <subcellularLocation>
        <location evidence="1">Endoplasmic reticulum membrane</location>
        <topology evidence="1">Multi-pass membrane protein</topology>
    </subcellularLocation>
    <subcellularLocation>
        <location evidence="1">Nucleus membrane</location>
        <topology evidence="1">Multi-pass membrane protein</topology>
    </subcellularLocation>
</comment>
<comment type="induction">
    <text evidence="2">Up-regulated by all-trans retinoic acid.</text>
</comment>
<comment type="PTM">
    <text evidence="1">Phosphorylation at Ser-36 by RPS6KB1 inhibits the leukotriene-C4 synthase activity.</text>
</comment>
<comment type="similarity">
    <text evidence="3">Belongs to the MAPEG family.</text>
</comment>
<name>LTC4S_RAT</name>
<feature type="chain" id="PRO_0000378088" description="Leukotriene C4 synthase">
    <location>
        <begin position="1"/>
        <end position="150"/>
    </location>
</feature>
<feature type="topological domain" description="Cytoplasmic" evidence="1">
    <location>
        <begin position="1"/>
        <end position="6"/>
    </location>
</feature>
<feature type="transmembrane region" description="Helical" evidence="1">
    <location>
        <begin position="7"/>
        <end position="27"/>
    </location>
</feature>
<feature type="topological domain" description="Lumenal" evidence="1">
    <location>
        <begin position="28"/>
        <end position="48"/>
    </location>
</feature>
<feature type="transmembrane region" description="Helical" evidence="1">
    <location>
        <begin position="49"/>
        <end position="69"/>
    </location>
</feature>
<feature type="topological domain" description="Cytoplasmic" evidence="1">
    <location>
        <begin position="70"/>
        <end position="73"/>
    </location>
</feature>
<feature type="transmembrane region" description="Helical" evidence="1">
    <location>
        <begin position="74"/>
        <end position="94"/>
    </location>
</feature>
<feature type="topological domain" description="Lumenal" evidence="1">
    <location>
        <begin position="95"/>
        <end position="104"/>
    </location>
</feature>
<feature type="transmembrane region" description="Helical" evidence="1">
    <location>
        <begin position="105"/>
        <end position="124"/>
    </location>
</feature>
<feature type="topological domain" description="Cytoplasmic" evidence="1">
    <location>
        <begin position="125"/>
        <end position="150"/>
    </location>
</feature>
<feature type="active site" description="Proton donor" evidence="1">
    <location>
        <position position="31"/>
    </location>
</feature>
<feature type="active site" description="Proton acceptor" evidence="1">
    <location>
        <position position="104"/>
    </location>
</feature>
<feature type="binding site" evidence="1">
    <location>
        <position position="30"/>
    </location>
    <ligand>
        <name>glutathione</name>
        <dbReference type="ChEBI" id="CHEBI:57925"/>
    </ligand>
</feature>
<feature type="binding site" evidence="1">
    <location>
        <begin position="51"/>
        <end position="55"/>
    </location>
    <ligand>
        <name>glutathione</name>
        <dbReference type="ChEBI" id="CHEBI:57925"/>
    </ligand>
</feature>
<feature type="binding site" evidence="1">
    <location>
        <begin position="58"/>
        <end position="59"/>
    </location>
    <ligand>
        <name>glutathione</name>
        <dbReference type="ChEBI" id="CHEBI:57925"/>
    </ligand>
</feature>
<feature type="binding site" evidence="1">
    <location>
        <begin position="93"/>
        <end position="97"/>
    </location>
    <ligand>
        <name>glutathione</name>
        <dbReference type="ChEBI" id="CHEBI:57925"/>
    </ligand>
</feature>
<feature type="modified residue" description="Phosphoserine" evidence="1">
    <location>
        <position position="36"/>
    </location>
</feature>
<feature type="sequence conflict" description="In Ref. 1; BAB58882." ref="1">
    <original>L</original>
    <variation>V</variation>
    <location>
        <position position="14"/>
    </location>
</feature>
<accession>Q925U2</accession>
<accession>G3V6E6</accession>
<evidence type="ECO:0000250" key="1">
    <source>
        <dbReference type="UniProtKB" id="Q16873"/>
    </source>
</evidence>
<evidence type="ECO:0000269" key="2">
    <source>
    </source>
</evidence>
<evidence type="ECO:0000305" key="3"/>
<gene>
    <name type="primary">Ltc4s</name>
</gene>